<comment type="function">
    <text evidence="1">Part of the MsrPQ system that repairs oxidized periplasmic proteins containing methionine sulfoxide residues (Met-O), using respiratory chain electrons. Thus protects these proteins from oxidative-stress damage caused by reactive species of oxygen and chlorine generated by the host defense mechanisms. MsrPQ is essential for the maintenance of envelope integrity under bleach stress, rescuing a wide series of structurally unrelated periplasmic proteins from methionine oxidation. MsrQ provides electrons for reduction to the reductase catalytic subunit MsrP, using the quinone pool of the respiratory chain.</text>
</comment>
<comment type="cofactor">
    <cofactor evidence="1">
        <name>FMN</name>
        <dbReference type="ChEBI" id="CHEBI:58210"/>
    </cofactor>
    <text evidence="1">Binds 1 FMN per subunit.</text>
</comment>
<comment type="cofactor">
    <cofactor evidence="1">
        <name>heme b</name>
        <dbReference type="ChEBI" id="CHEBI:60344"/>
    </cofactor>
    <text evidence="1">Binds 1 heme b (iron(II)-protoporphyrin IX) group per subunit.</text>
</comment>
<comment type="subunit">
    <text evidence="1">Heterodimer of a catalytic subunit (MsrP) and a heme-binding subunit (MsrQ).</text>
</comment>
<comment type="subcellular location">
    <subcellularLocation>
        <location evidence="1">Cell inner membrane</location>
        <topology evidence="1">Multi-pass membrane protein</topology>
    </subcellularLocation>
</comment>
<comment type="similarity">
    <text evidence="1">Belongs to the MsrQ family.</text>
</comment>
<comment type="sequence caution" evidence="2">
    <conflict type="erroneous initiation">
        <sequence resource="EMBL-CDS" id="CAE35739"/>
    </conflict>
</comment>
<protein>
    <recommendedName>
        <fullName evidence="1">Protein-methionine-sulfoxide reductase heme-binding subunit MsrQ</fullName>
    </recommendedName>
    <alternativeName>
        <fullName evidence="1">Flavocytochrome MsrQ</fullName>
    </alternativeName>
</protein>
<sequence>MPAAPLTARAIGRIKPLLFVAGLLPFARWFWLGANDGLSANPVEFLTRSSGTWTLVCLLVTLAITPLRRLTGQPALVRLRRMCGLFAFFYGSLHFLAWVWWDRGLDPVSMLQDVGERPFITVGFAAFVLMAALAATSTQWAMRKLGKRWQVLHRAVYAIGLLAILHFWWHKAGKNDLQQPLLYGSVLALLLGWRVAAWWRRRGAAR</sequence>
<reference key="1">
    <citation type="journal article" date="2003" name="Nat. Genet.">
        <title>Comparative analysis of the genome sequences of Bordetella pertussis, Bordetella parapertussis and Bordetella bronchiseptica.</title>
        <authorList>
            <person name="Parkhill J."/>
            <person name="Sebaihia M."/>
            <person name="Preston A."/>
            <person name="Murphy L.D."/>
            <person name="Thomson N.R."/>
            <person name="Harris D.E."/>
            <person name="Holden M.T.G."/>
            <person name="Churcher C.M."/>
            <person name="Bentley S.D."/>
            <person name="Mungall K.L."/>
            <person name="Cerdeno-Tarraga A.-M."/>
            <person name="Temple L."/>
            <person name="James K.D."/>
            <person name="Harris B."/>
            <person name="Quail M.A."/>
            <person name="Achtman M."/>
            <person name="Atkin R."/>
            <person name="Baker S."/>
            <person name="Basham D."/>
            <person name="Bason N."/>
            <person name="Cherevach I."/>
            <person name="Chillingworth T."/>
            <person name="Collins M."/>
            <person name="Cronin A."/>
            <person name="Davis P."/>
            <person name="Doggett J."/>
            <person name="Feltwell T."/>
            <person name="Goble A."/>
            <person name="Hamlin N."/>
            <person name="Hauser H."/>
            <person name="Holroyd S."/>
            <person name="Jagels K."/>
            <person name="Leather S."/>
            <person name="Moule S."/>
            <person name="Norberczak H."/>
            <person name="O'Neil S."/>
            <person name="Ormond D."/>
            <person name="Price C."/>
            <person name="Rabbinowitsch E."/>
            <person name="Rutter S."/>
            <person name="Sanders M."/>
            <person name="Saunders D."/>
            <person name="Seeger K."/>
            <person name="Sharp S."/>
            <person name="Simmonds M."/>
            <person name="Skelton J."/>
            <person name="Squares R."/>
            <person name="Squares S."/>
            <person name="Stevens K."/>
            <person name="Unwin L."/>
            <person name="Whitehead S."/>
            <person name="Barrell B.G."/>
            <person name="Maskell D.J."/>
        </authorList>
    </citation>
    <scope>NUCLEOTIDE SEQUENCE [LARGE SCALE GENOMIC DNA]</scope>
    <source>
        <strain>ATCC BAA-588 / NCTC 13252 / RB50</strain>
    </source>
</reference>
<name>MSRQ_BORBR</name>
<keyword id="KW-0997">Cell inner membrane</keyword>
<keyword id="KW-1003">Cell membrane</keyword>
<keyword id="KW-0249">Electron transport</keyword>
<keyword id="KW-0285">Flavoprotein</keyword>
<keyword id="KW-0288">FMN</keyword>
<keyword id="KW-0349">Heme</keyword>
<keyword id="KW-0408">Iron</keyword>
<keyword id="KW-0472">Membrane</keyword>
<keyword id="KW-0479">Metal-binding</keyword>
<keyword id="KW-0812">Transmembrane</keyword>
<keyword id="KW-1133">Transmembrane helix</keyword>
<keyword id="KW-0813">Transport</keyword>
<proteinExistence type="inferred from homology"/>
<evidence type="ECO:0000255" key="1">
    <source>
        <dbReference type="HAMAP-Rule" id="MF_01207"/>
    </source>
</evidence>
<evidence type="ECO:0000305" key="2"/>
<dbReference type="EMBL" id="BX640448">
    <property type="protein sequence ID" value="CAE35739.1"/>
    <property type="status" value="ALT_INIT"/>
    <property type="molecule type" value="Genomic_DNA"/>
</dbReference>
<dbReference type="SMR" id="Q7WD13"/>
<dbReference type="KEGG" id="bbr:BB3765"/>
<dbReference type="eggNOG" id="COG2717">
    <property type="taxonomic scope" value="Bacteria"/>
</dbReference>
<dbReference type="HOGENOM" id="CLU_080662_0_0_4"/>
<dbReference type="Proteomes" id="UP000001027">
    <property type="component" value="Chromosome"/>
</dbReference>
<dbReference type="GO" id="GO:0005886">
    <property type="term" value="C:plasma membrane"/>
    <property type="evidence" value="ECO:0007669"/>
    <property type="project" value="UniProtKB-SubCell"/>
</dbReference>
<dbReference type="GO" id="GO:0009055">
    <property type="term" value="F:electron transfer activity"/>
    <property type="evidence" value="ECO:0007669"/>
    <property type="project" value="UniProtKB-UniRule"/>
</dbReference>
<dbReference type="GO" id="GO:0010181">
    <property type="term" value="F:FMN binding"/>
    <property type="evidence" value="ECO:0007669"/>
    <property type="project" value="UniProtKB-UniRule"/>
</dbReference>
<dbReference type="GO" id="GO:0020037">
    <property type="term" value="F:heme binding"/>
    <property type="evidence" value="ECO:0007669"/>
    <property type="project" value="UniProtKB-UniRule"/>
</dbReference>
<dbReference type="GO" id="GO:0046872">
    <property type="term" value="F:metal ion binding"/>
    <property type="evidence" value="ECO:0007669"/>
    <property type="project" value="UniProtKB-KW"/>
</dbReference>
<dbReference type="GO" id="GO:0016679">
    <property type="term" value="F:oxidoreductase activity, acting on diphenols and related substances as donors"/>
    <property type="evidence" value="ECO:0007669"/>
    <property type="project" value="TreeGrafter"/>
</dbReference>
<dbReference type="GO" id="GO:0030091">
    <property type="term" value="P:protein repair"/>
    <property type="evidence" value="ECO:0007669"/>
    <property type="project" value="UniProtKB-UniRule"/>
</dbReference>
<dbReference type="HAMAP" id="MF_01207">
    <property type="entry name" value="MsrQ"/>
    <property type="match status" value="1"/>
</dbReference>
<dbReference type="InterPro" id="IPR013130">
    <property type="entry name" value="Fe3_Rdtase_TM_dom"/>
</dbReference>
<dbReference type="InterPro" id="IPR022837">
    <property type="entry name" value="MsrQ-like"/>
</dbReference>
<dbReference type="NCBIfam" id="NF003836">
    <property type="entry name" value="PRK05419.2-3"/>
    <property type="match status" value="1"/>
</dbReference>
<dbReference type="PANTHER" id="PTHR36964">
    <property type="entry name" value="PROTEIN-METHIONINE-SULFOXIDE REDUCTASE HEME-BINDING SUBUNIT MSRQ"/>
    <property type="match status" value="1"/>
</dbReference>
<dbReference type="PANTHER" id="PTHR36964:SF1">
    <property type="entry name" value="PROTEIN-METHIONINE-SULFOXIDE REDUCTASE HEME-BINDING SUBUNIT MSRQ"/>
    <property type="match status" value="1"/>
</dbReference>
<dbReference type="Pfam" id="PF01794">
    <property type="entry name" value="Ferric_reduct"/>
    <property type="match status" value="1"/>
</dbReference>
<accession>Q7WD13</accession>
<gene>
    <name evidence="1" type="primary">msrQ</name>
    <name type="ordered locus">BB3765</name>
</gene>
<organism>
    <name type="scientific">Bordetella bronchiseptica (strain ATCC BAA-588 / NCTC 13252 / RB50)</name>
    <name type="common">Alcaligenes bronchisepticus</name>
    <dbReference type="NCBI Taxonomy" id="257310"/>
    <lineage>
        <taxon>Bacteria</taxon>
        <taxon>Pseudomonadati</taxon>
        <taxon>Pseudomonadota</taxon>
        <taxon>Betaproteobacteria</taxon>
        <taxon>Burkholderiales</taxon>
        <taxon>Alcaligenaceae</taxon>
        <taxon>Bordetella</taxon>
    </lineage>
</organism>
<feature type="chain" id="PRO_0000091567" description="Protein-methionine-sulfoxide reductase heme-binding subunit MsrQ">
    <location>
        <begin position="1"/>
        <end position="206"/>
    </location>
</feature>
<feature type="transmembrane region" description="Helical" evidence="1">
    <location>
        <begin position="14"/>
        <end position="34"/>
    </location>
</feature>
<feature type="transmembrane region" description="Helical" evidence="1">
    <location>
        <begin position="45"/>
        <end position="65"/>
    </location>
</feature>
<feature type="transmembrane region" description="Helical" evidence="1">
    <location>
        <begin position="82"/>
        <end position="102"/>
    </location>
</feature>
<feature type="transmembrane region" description="Helical" evidence="1">
    <location>
        <begin position="118"/>
        <end position="138"/>
    </location>
</feature>
<feature type="transmembrane region" description="Helical" evidence="1">
    <location>
        <begin position="149"/>
        <end position="169"/>
    </location>
</feature>
<feature type="transmembrane region" description="Helical" evidence="1">
    <location>
        <begin position="179"/>
        <end position="199"/>
    </location>
</feature>